<sequence>MIIPAIDLIDGQVVRLYQGDYAQQTTFNLSPLDQLKSYQQQGASLLHIVDLTGAKEPDRRQTALISELVNNLDTPIQVGGGIRTEAQLSELLEIGVSRVVIGSLAVKEPELVKSWFTKYGSDAICLALDVNINEQGEKIVAVSGWQSGGGKSLESLVEEFKSVGLKHALVTDISRDGTLKGANTELYYEIATLYPEIQWQASGGIATLDDVNAVKQSGATGIIIGKALLINQFTVEEAIACWPNA</sequence>
<protein>
    <recommendedName>
        <fullName evidence="1">1-(5-phosphoribosyl)-5-[(5-phosphoribosylamino)methylideneamino] imidazole-4-carboxamide isomerase</fullName>
        <ecNumber evidence="1">5.3.1.16</ecNumber>
    </recommendedName>
    <alternativeName>
        <fullName evidence="1">Phosphoribosylformimino-5-aminoimidazole carboxamide ribotide isomerase</fullName>
    </alternativeName>
</protein>
<feature type="chain" id="PRO_1000084114" description="1-(5-phosphoribosyl)-5-[(5-phosphoribosylamino)methylideneamino] imidazole-4-carboxamide isomerase">
    <location>
        <begin position="1"/>
        <end position="245"/>
    </location>
</feature>
<feature type="active site" description="Proton acceptor" evidence="1">
    <location>
        <position position="7"/>
    </location>
</feature>
<feature type="active site" description="Proton donor" evidence="1">
    <location>
        <position position="129"/>
    </location>
</feature>
<evidence type="ECO:0000255" key="1">
    <source>
        <dbReference type="HAMAP-Rule" id="MF_01014"/>
    </source>
</evidence>
<comment type="catalytic activity">
    <reaction evidence="1">
        <text>1-(5-phospho-beta-D-ribosyl)-5-[(5-phospho-beta-D-ribosylamino)methylideneamino]imidazole-4-carboxamide = 5-[(5-phospho-1-deoxy-D-ribulos-1-ylimino)methylamino]-1-(5-phospho-beta-D-ribosyl)imidazole-4-carboxamide</text>
        <dbReference type="Rhea" id="RHEA:15469"/>
        <dbReference type="ChEBI" id="CHEBI:58435"/>
        <dbReference type="ChEBI" id="CHEBI:58525"/>
        <dbReference type="EC" id="5.3.1.16"/>
    </reaction>
</comment>
<comment type="pathway">
    <text evidence="1">Amino-acid biosynthesis; L-histidine biosynthesis; L-histidine from 5-phospho-alpha-D-ribose 1-diphosphate: step 4/9.</text>
</comment>
<comment type="subcellular location">
    <subcellularLocation>
        <location evidence="1">Cytoplasm</location>
    </subcellularLocation>
</comment>
<comment type="similarity">
    <text evidence="1">Belongs to the HisA/HisF family.</text>
</comment>
<dbReference type="EC" id="5.3.1.16" evidence="1"/>
<dbReference type="EMBL" id="CP000851">
    <property type="protein sequence ID" value="ABV87781.1"/>
    <property type="molecule type" value="Genomic_DNA"/>
</dbReference>
<dbReference type="RefSeq" id="WP_012155693.1">
    <property type="nucleotide sequence ID" value="NC_009901.1"/>
</dbReference>
<dbReference type="SMR" id="A8H5E4"/>
<dbReference type="STRING" id="398579.Spea_2461"/>
<dbReference type="KEGG" id="spl:Spea_2461"/>
<dbReference type="eggNOG" id="COG0106">
    <property type="taxonomic scope" value="Bacteria"/>
</dbReference>
<dbReference type="HOGENOM" id="CLU_048577_1_2_6"/>
<dbReference type="OrthoDB" id="9807749at2"/>
<dbReference type="UniPathway" id="UPA00031">
    <property type="reaction ID" value="UER00009"/>
</dbReference>
<dbReference type="Proteomes" id="UP000002608">
    <property type="component" value="Chromosome"/>
</dbReference>
<dbReference type="GO" id="GO:0005737">
    <property type="term" value="C:cytoplasm"/>
    <property type="evidence" value="ECO:0007669"/>
    <property type="project" value="UniProtKB-SubCell"/>
</dbReference>
<dbReference type="GO" id="GO:0003949">
    <property type="term" value="F:1-(5-phosphoribosyl)-5-[(5-phosphoribosylamino)methylideneamino]imidazole-4-carboxamide isomerase activity"/>
    <property type="evidence" value="ECO:0007669"/>
    <property type="project" value="UniProtKB-UniRule"/>
</dbReference>
<dbReference type="GO" id="GO:0000105">
    <property type="term" value="P:L-histidine biosynthetic process"/>
    <property type="evidence" value="ECO:0007669"/>
    <property type="project" value="UniProtKB-UniRule"/>
</dbReference>
<dbReference type="GO" id="GO:0000162">
    <property type="term" value="P:L-tryptophan biosynthetic process"/>
    <property type="evidence" value="ECO:0007669"/>
    <property type="project" value="TreeGrafter"/>
</dbReference>
<dbReference type="CDD" id="cd04732">
    <property type="entry name" value="HisA"/>
    <property type="match status" value="1"/>
</dbReference>
<dbReference type="FunFam" id="3.20.20.70:FF:000009">
    <property type="entry name" value="1-(5-phosphoribosyl)-5-[(5-phosphoribosylamino)methylideneamino] imidazole-4-carboxamide isomerase"/>
    <property type="match status" value="1"/>
</dbReference>
<dbReference type="Gene3D" id="3.20.20.70">
    <property type="entry name" value="Aldolase class I"/>
    <property type="match status" value="1"/>
</dbReference>
<dbReference type="HAMAP" id="MF_01014">
    <property type="entry name" value="HisA"/>
    <property type="match status" value="1"/>
</dbReference>
<dbReference type="InterPro" id="IPR013785">
    <property type="entry name" value="Aldolase_TIM"/>
</dbReference>
<dbReference type="InterPro" id="IPR006062">
    <property type="entry name" value="His_biosynth"/>
</dbReference>
<dbReference type="InterPro" id="IPR006063">
    <property type="entry name" value="HisA_bact_arch"/>
</dbReference>
<dbReference type="InterPro" id="IPR044524">
    <property type="entry name" value="Isoase_HisA-like"/>
</dbReference>
<dbReference type="InterPro" id="IPR023016">
    <property type="entry name" value="Isoase_HisA-like_bact"/>
</dbReference>
<dbReference type="InterPro" id="IPR011060">
    <property type="entry name" value="RibuloseP-bd_barrel"/>
</dbReference>
<dbReference type="NCBIfam" id="TIGR00007">
    <property type="entry name" value="1-(5-phosphoribosyl)-5-[(5-phosphoribosylamino)methylideneamino]imidazole-4-carboxamide isomerase"/>
    <property type="match status" value="1"/>
</dbReference>
<dbReference type="PANTHER" id="PTHR43090">
    <property type="entry name" value="1-(5-PHOSPHORIBOSYL)-5-[(5-PHOSPHORIBOSYLAMINO)METHYLIDENEAMINO] IMIDAZOLE-4-CARBOXAMIDE ISOMERASE"/>
    <property type="match status" value="1"/>
</dbReference>
<dbReference type="PANTHER" id="PTHR43090:SF2">
    <property type="entry name" value="1-(5-PHOSPHORIBOSYL)-5-[(5-PHOSPHORIBOSYLAMINO)METHYLIDENEAMINO] IMIDAZOLE-4-CARBOXAMIDE ISOMERASE"/>
    <property type="match status" value="1"/>
</dbReference>
<dbReference type="Pfam" id="PF00977">
    <property type="entry name" value="His_biosynth"/>
    <property type="match status" value="1"/>
</dbReference>
<dbReference type="SUPFAM" id="SSF51366">
    <property type="entry name" value="Ribulose-phoshate binding barrel"/>
    <property type="match status" value="1"/>
</dbReference>
<reference key="1">
    <citation type="submission" date="2007-10" db="EMBL/GenBank/DDBJ databases">
        <title>Complete sequence of Shewanella pealeana ATCC 700345.</title>
        <authorList>
            <consortium name="US DOE Joint Genome Institute"/>
            <person name="Copeland A."/>
            <person name="Lucas S."/>
            <person name="Lapidus A."/>
            <person name="Barry K."/>
            <person name="Glavina del Rio T."/>
            <person name="Dalin E."/>
            <person name="Tice H."/>
            <person name="Pitluck S."/>
            <person name="Chertkov O."/>
            <person name="Brettin T."/>
            <person name="Bruce D."/>
            <person name="Detter J.C."/>
            <person name="Han C."/>
            <person name="Schmutz J."/>
            <person name="Larimer F."/>
            <person name="Land M."/>
            <person name="Hauser L."/>
            <person name="Kyrpides N."/>
            <person name="Kim E."/>
            <person name="Zhao J.-S.Z."/>
            <person name="Manno D."/>
            <person name="Hawari J."/>
            <person name="Richardson P."/>
        </authorList>
    </citation>
    <scope>NUCLEOTIDE SEQUENCE [LARGE SCALE GENOMIC DNA]</scope>
    <source>
        <strain>ATCC 700345 / ANG-SQ1</strain>
    </source>
</reference>
<organism>
    <name type="scientific">Shewanella pealeana (strain ATCC 700345 / ANG-SQ1)</name>
    <dbReference type="NCBI Taxonomy" id="398579"/>
    <lineage>
        <taxon>Bacteria</taxon>
        <taxon>Pseudomonadati</taxon>
        <taxon>Pseudomonadota</taxon>
        <taxon>Gammaproteobacteria</taxon>
        <taxon>Alteromonadales</taxon>
        <taxon>Shewanellaceae</taxon>
        <taxon>Shewanella</taxon>
    </lineage>
</organism>
<gene>
    <name evidence="1" type="primary">hisA</name>
    <name type="ordered locus">Spea_2461</name>
</gene>
<proteinExistence type="inferred from homology"/>
<name>HIS4_SHEPA</name>
<keyword id="KW-0028">Amino-acid biosynthesis</keyword>
<keyword id="KW-0963">Cytoplasm</keyword>
<keyword id="KW-0368">Histidine biosynthesis</keyword>
<keyword id="KW-0413">Isomerase</keyword>
<keyword id="KW-1185">Reference proteome</keyword>
<accession>A8H5E4</accession>